<name>RECO_NOSP7</name>
<evidence type="ECO:0000255" key="1">
    <source>
        <dbReference type="HAMAP-Rule" id="MF_00201"/>
    </source>
</evidence>
<sequence>MSRTYKASGINLKTQVLGESDKIVTILTPEFGLIRAVAPGARKHNSSLGGRSGMFVVNELLIAKGRSLDKITQAQTLKTYPGLAKDLGKLAASQYLAEIVLSQALSEQPQEELYELFNEHLHRLEALSNANASGVLAHLAHGVFHLLALAGVTPQVQICCLSGRSLKPDFTEPNWQIGFSVPTGGTICLEAWKRLRTEGKGEINNQYPIPHIPLPMPHAQTVVVHRQEIPLISSRLGAMELALLQHLSQPEIMQIDGARDHNWLSVEQILRQYAQYQLGRPIRSATLIDSYFAANHDATI</sequence>
<reference key="1">
    <citation type="journal article" date="2013" name="Plant Physiol.">
        <title>A Nostoc punctiforme Sugar Transporter Necessary to Establish a Cyanobacterium-Plant Symbiosis.</title>
        <authorList>
            <person name="Ekman M."/>
            <person name="Picossi S."/>
            <person name="Campbell E.L."/>
            <person name="Meeks J.C."/>
            <person name="Flores E."/>
        </authorList>
    </citation>
    <scope>NUCLEOTIDE SEQUENCE [LARGE SCALE GENOMIC DNA]</scope>
    <source>
        <strain>ATCC 29133 / PCC 73102</strain>
    </source>
</reference>
<comment type="function">
    <text evidence="1">Involved in DNA repair and RecF pathway recombination.</text>
</comment>
<comment type="similarity">
    <text evidence="1">Belongs to the RecO family.</text>
</comment>
<dbReference type="EMBL" id="CP001037">
    <property type="protein sequence ID" value="ACC82719.1"/>
    <property type="molecule type" value="Genomic_DNA"/>
</dbReference>
<dbReference type="RefSeq" id="WP_012410682.1">
    <property type="nucleotide sequence ID" value="NC_010628.1"/>
</dbReference>
<dbReference type="SMR" id="B2ITL1"/>
<dbReference type="STRING" id="63737.Npun_F4346"/>
<dbReference type="EnsemblBacteria" id="ACC82719">
    <property type="protein sequence ID" value="ACC82719"/>
    <property type="gene ID" value="Npun_F4346"/>
</dbReference>
<dbReference type="KEGG" id="npu:Npun_F4346"/>
<dbReference type="eggNOG" id="COG1381">
    <property type="taxonomic scope" value="Bacteria"/>
</dbReference>
<dbReference type="HOGENOM" id="CLU_066632_0_0_3"/>
<dbReference type="OrthoDB" id="9797083at2"/>
<dbReference type="PhylomeDB" id="B2ITL1"/>
<dbReference type="Proteomes" id="UP000001191">
    <property type="component" value="Chromosome"/>
</dbReference>
<dbReference type="GO" id="GO:0043590">
    <property type="term" value="C:bacterial nucleoid"/>
    <property type="evidence" value="ECO:0007669"/>
    <property type="project" value="TreeGrafter"/>
</dbReference>
<dbReference type="GO" id="GO:0006310">
    <property type="term" value="P:DNA recombination"/>
    <property type="evidence" value="ECO:0007669"/>
    <property type="project" value="UniProtKB-UniRule"/>
</dbReference>
<dbReference type="GO" id="GO:0006302">
    <property type="term" value="P:double-strand break repair"/>
    <property type="evidence" value="ECO:0007669"/>
    <property type="project" value="TreeGrafter"/>
</dbReference>
<dbReference type="Gene3D" id="2.40.50.140">
    <property type="entry name" value="Nucleic acid-binding proteins"/>
    <property type="match status" value="1"/>
</dbReference>
<dbReference type="Gene3D" id="1.20.1440.120">
    <property type="entry name" value="Recombination protein O, C-terminal domain"/>
    <property type="match status" value="1"/>
</dbReference>
<dbReference type="HAMAP" id="MF_00201">
    <property type="entry name" value="RecO"/>
    <property type="match status" value="1"/>
</dbReference>
<dbReference type="InterPro" id="IPR037278">
    <property type="entry name" value="ARFGAP/RecO"/>
</dbReference>
<dbReference type="InterPro" id="IPR022572">
    <property type="entry name" value="DNA_rep/recomb_RecO_N"/>
</dbReference>
<dbReference type="InterPro" id="IPR012340">
    <property type="entry name" value="NA-bd_OB-fold"/>
</dbReference>
<dbReference type="InterPro" id="IPR003717">
    <property type="entry name" value="RecO"/>
</dbReference>
<dbReference type="InterPro" id="IPR042242">
    <property type="entry name" value="RecO_C"/>
</dbReference>
<dbReference type="NCBIfam" id="TIGR00613">
    <property type="entry name" value="reco"/>
    <property type="match status" value="1"/>
</dbReference>
<dbReference type="PANTHER" id="PTHR33991">
    <property type="entry name" value="DNA REPAIR PROTEIN RECO"/>
    <property type="match status" value="1"/>
</dbReference>
<dbReference type="PANTHER" id="PTHR33991:SF1">
    <property type="entry name" value="DNA REPAIR PROTEIN RECO"/>
    <property type="match status" value="1"/>
</dbReference>
<dbReference type="Pfam" id="PF02565">
    <property type="entry name" value="RecO_C"/>
    <property type="match status" value="1"/>
</dbReference>
<dbReference type="Pfam" id="PF11967">
    <property type="entry name" value="RecO_N"/>
    <property type="match status" value="1"/>
</dbReference>
<dbReference type="SUPFAM" id="SSF57863">
    <property type="entry name" value="ArfGap/RecO-like zinc finger"/>
    <property type="match status" value="1"/>
</dbReference>
<dbReference type="SUPFAM" id="SSF50249">
    <property type="entry name" value="Nucleic acid-binding proteins"/>
    <property type="match status" value="1"/>
</dbReference>
<protein>
    <recommendedName>
        <fullName evidence="1">DNA repair protein RecO</fullName>
    </recommendedName>
    <alternativeName>
        <fullName evidence="1">Recombination protein O</fullName>
    </alternativeName>
</protein>
<keyword id="KW-0227">DNA damage</keyword>
<keyword id="KW-0233">DNA recombination</keyword>
<keyword id="KW-0234">DNA repair</keyword>
<keyword id="KW-1185">Reference proteome</keyword>
<accession>B2ITL1</accession>
<gene>
    <name evidence="1" type="primary">recO</name>
    <name type="ordered locus">Npun_F4346</name>
</gene>
<organism>
    <name type="scientific">Nostoc punctiforme (strain ATCC 29133 / PCC 73102)</name>
    <dbReference type="NCBI Taxonomy" id="63737"/>
    <lineage>
        <taxon>Bacteria</taxon>
        <taxon>Bacillati</taxon>
        <taxon>Cyanobacteriota</taxon>
        <taxon>Cyanophyceae</taxon>
        <taxon>Nostocales</taxon>
        <taxon>Nostocaceae</taxon>
        <taxon>Nostoc</taxon>
    </lineage>
</organism>
<feature type="chain" id="PRO_1000099394" description="DNA repair protein RecO">
    <location>
        <begin position="1"/>
        <end position="300"/>
    </location>
</feature>
<proteinExistence type="inferred from homology"/>